<protein>
    <recommendedName>
        <fullName evidence="1">Small ribosomal subunit protein uS2</fullName>
    </recommendedName>
    <alternativeName>
        <fullName evidence="3">30S ribosomal protein S2</fullName>
    </alternativeName>
</protein>
<comment type="similarity">
    <text evidence="1">Belongs to the universal ribosomal protein uS2 family.</text>
</comment>
<comment type="sequence caution" evidence="3">
    <conflict type="erroneous initiation">
        <sequence resource="EMBL-CDS" id="ABC44962"/>
    </conflict>
</comment>
<gene>
    <name evidence="1" type="primary">rpsB</name>
    <name type="ordered locus">SRU_0036</name>
</gene>
<name>RS2_SALRD</name>
<keyword id="KW-1185">Reference proteome</keyword>
<keyword id="KW-0687">Ribonucleoprotein</keyword>
<keyword id="KW-0689">Ribosomal protein</keyword>
<reference key="1">
    <citation type="journal article" date="2005" name="Proc. Natl. Acad. Sci. U.S.A.">
        <title>The genome of Salinibacter ruber: convergence and gene exchange among hyperhalophilic bacteria and archaea.</title>
        <authorList>
            <person name="Mongodin E.F."/>
            <person name="Nelson K.E."/>
            <person name="Daugherty S."/>
            <person name="DeBoy R.T."/>
            <person name="Wister J."/>
            <person name="Khouri H."/>
            <person name="Weidman J."/>
            <person name="Walsh D.A."/>
            <person name="Papke R.T."/>
            <person name="Sanchez Perez G."/>
            <person name="Sharma A.K."/>
            <person name="Nesbo C.L."/>
            <person name="MacLeod D."/>
            <person name="Bapteste E."/>
            <person name="Doolittle W.F."/>
            <person name="Charlebois R.L."/>
            <person name="Legault B."/>
            <person name="Rodriguez-Valera F."/>
        </authorList>
    </citation>
    <scope>NUCLEOTIDE SEQUENCE [LARGE SCALE GENOMIC DNA]</scope>
    <source>
        <strain>DSM 13855 / CECT 5946 / M31</strain>
    </source>
</reference>
<proteinExistence type="inferred from homology"/>
<dbReference type="EMBL" id="CP000159">
    <property type="protein sequence ID" value="ABC44962.1"/>
    <property type="status" value="ALT_INIT"/>
    <property type="molecule type" value="Genomic_DNA"/>
</dbReference>
<dbReference type="RefSeq" id="WP_118825819.1">
    <property type="nucleotide sequence ID" value="NC_007677.1"/>
</dbReference>
<dbReference type="RefSeq" id="YP_444191.1">
    <property type="nucleotide sequence ID" value="NC_007677.1"/>
</dbReference>
<dbReference type="SMR" id="Q2S6J0"/>
<dbReference type="STRING" id="309807.SRU_0036"/>
<dbReference type="EnsemblBacteria" id="ABC44962">
    <property type="protein sequence ID" value="ABC44962"/>
    <property type="gene ID" value="SRU_0036"/>
</dbReference>
<dbReference type="KEGG" id="sru:SRU_0036"/>
<dbReference type="PATRIC" id="fig|309807.25.peg.33"/>
<dbReference type="eggNOG" id="COG0052">
    <property type="taxonomic scope" value="Bacteria"/>
</dbReference>
<dbReference type="HOGENOM" id="CLU_760515_0_0_10"/>
<dbReference type="OrthoDB" id="9808036at2"/>
<dbReference type="Proteomes" id="UP000008674">
    <property type="component" value="Chromosome"/>
</dbReference>
<dbReference type="GO" id="GO:0022627">
    <property type="term" value="C:cytosolic small ribosomal subunit"/>
    <property type="evidence" value="ECO:0007669"/>
    <property type="project" value="TreeGrafter"/>
</dbReference>
<dbReference type="GO" id="GO:0003735">
    <property type="term" value="F:structural constituent of ribosome"/>
    <property type="evidence" value="ECO:0007669"/>
    <property type="project" value="InterPro"/>
</dbReference>
<dbReference type="GO" id="GO:0006412">
    <property type="term" value="P:translation"/>
    <property type="evidence" value="ECO:0007669"/>
    <property type="project" value="UniProtKB-UniRule"/>
</dbReference>
<dbReference type="CDD" id="cd01425">
    <property type="entry name" value="RPS2"/>
    <property type="match status" value="1"/>
</dbReference>
<dbReference type="FunFam" id="1.10.287.610:FF:000001">
    <property type="entry name" value="30S ribosomal protein S2"/>
    <property type="match status" value="1"/>
</dbReference>
<dbReference type="Gene3D" id="3.40.50.10490">
    <property type="entry name" value="Glucose-6-phosphate isomerase like protein, domain 1"/>
    <property type="match status" value="1"/>
</dbReference>
<dbReference type="Gene3D" id="1.10.287.610">
    <property type="entry name" value="Helix hairpin bin"/>
    <property type="match status" value="1"/>
</dbReference>
<dbReference type="HAMAP" id="MF_00291_B">
    <property type="entry name" value="Ribosomal_uS2_B"/>
    <property type="match status" value="1"/>
</dbReference>
<dbReference type="InterPro" id="IPR001865">
    <property type="entry name" value="Ribosomal_uS2"/>
</dbReference>
<dbReference type="InterPro" id="IPR005706">
    <property type="entry name" value="Ribosomal_uS2_bac/mit/plastid"/>
</dbReference>
<dbReference type="InterPro" id="IPR018130">
    <property type="entry name" value="Ribosomal_uS2_CS"/>
</dbReference>
<dbReference type="InterPro" id="IPR023591">
    <property type="entry name" value="Ribosomal_uS2_flav_dom_sf"/>
</dbReference>
<dbReference type="NCBIfam" id="TIGR01011">
    <property type="entry name" value="rpsB_bact"/>
    <property type="match status" value="1"/>
</dbReference>
<dbReference type="PANTHER" id="PTHR12534">
    <property type="entry name" value="30S RIBOSOMAL PROTEIN S2 PROKARYOTIC AND ORGANELLAR"/>
    <property type="match status" value="1"/>
</dbReference>
<dbReference type="PANTHER" id="PTHR12534:SF0">
    <property type="entry name" value="SMALL RIBOSOMAL SUBUNIT PROTEIN US2M"/>
    <property type="match status" value="1"/>
</dbReference>
<dbReference type="Pfam" id="PF00318">
    <property type="entry name" value="Ribosomal_S2"/>
    <property type="match status" value="1"/>
</dbReference>
<dbReference type="PRINTS" id="PR00395">
    <property type="entry name" value="RIBOSOMALS2"/>
</dbReference>
<dbReference type="SUPFAM" id="SSF52313">
    <property type="entry name" value="Ribosomal protein S2"/>
    <property type="match status" value="1"/>
</dbReference>
<dbReference type="PROSITE" id="PS00962">
    <property type="entry name" value="RIBOSOMAL_S2_1"/>
    <property type="match status" value="1"/>
</dbReference>
<accession>Q2S6J0</accession>
<organism>
    <name type="scientific">Salinibacter ruber (strain DSM 13855 / M31)</name>
    <dbReference type="NCBI Taxonomy" id="309807"/>
    <lineage>
        <taxon>Bacteria</taxon>
        <taxon>Pseudomonadati</taxon>
        <taxon>Rhodothermota</taxon>
        <taxon>Rhodothermia</taxon>
        <taxon>Rhodothermales</taxon>
        <taxon>Salinibacteraceae</taxon>
        <taxon>Salinibacter</taxon>
    </lineage>
</organism>
<feature type="chain" id="PRO_0000352034" description="Small ribosomal subunit protein uS2">
    <location>
        <begin position="1"/>
        <end position="320"/>
    </location>
</feature>
<feature type="region of interest" description="Disordered" evidence="2">
    <location>
        <begin position="1"/>
        <end position="83"/>
    </location>
</feature>
<feature type="compositionally biased region" description="Acidic residues" evidence="2">
    <location>
        <begin position="1"/>
        <end position="22"/>
    </location>
</feature>
<feature type="compositionally biased region" description="Low complexity" evidence="2">
    <location>
        <begin position="27"/>
        <end position="41"/>
    </location>
</feature>
<feature type="compositionally biased region" description="Acidic residues" evidence="2">
    <location>
        <begin position="42"/>
        <end position="57"/>
    </location>
</feature>
<feature type="compositionally biased region" description="Acidic residues" evidence="2">
    <location>
        <begin position="65"/>
        <end position="78"/>
    </location>
</feature>
<sequence>MADETTTDTPDVQDEDAPDEDAPQTPDDTASDSTGEAAAADTDADAPDENAPDEDAPDAAPQDKDDGDDAPEESSSEEETSHRVTIEELLKAGAHFGHLTSRWNPRMEKYIFMERNNIHIIDLMQSQVLLDEAAEAAKRFARRGKKILFAGTKKQAEDIVREHAEECGMPHMVDRWLGGTMTNFQTIRKSIRRMEEIERMDRDGTLDKLKKKEKLMRLREHEKLEETLGGIRDMANLPSAIYIVDVQREDIAVSEANNLGIPIIAMVDTNGNPKNIDYPIPVNDDALSSIELVTSTLTDAVQEGLQERRMKKEEKKKAAA</sequence>
<evidence type="ECO:0000255" key="1">
    <source>
        <dbReference type="HAMAP-Rule" id="MF_00291"/>
    </source>
</evidence>
<evidence type="ECO:0000256" key="2">
    <source>
        <dbReference type="SAM" id="MobiDB-lite"/>
    </source>
</evidence>
<evidence type="ECO:0000305" key="3"/>